<keyword id="KW-0963">Cytoplasm</keyword>
<keyword id="KW-0378">Hydrolase</keyword>
<keyword id="KW-1185">Reference proteome</keyword>
<evidence type="ECO:0000255" key="1">
    <source>
        <dbReference type="HAMAP-Rule" id="MF_01954"/>
    </source>
</evidence>
<proteinExistence type="inferred from homology"/>
<gene>
    <name evidence="1" type="primary">ureB</name>
    <name type="ordered locus">Cthe_1817</name>
</gene>
<organism>
    <name type="scientific">Acetivibrio thermocellus (strain ATCC 27405 / DSM 1237 / JCM 9322 / NBRC 103400 / NCIMB 10682 / NRRL B-4536 / VPI 7372)</name>
    <name type="common">Clostridium thermocellum</name>
    <dbReference type="NCBI Taxonomy" id="203119"/>
    <lineage>
        <taxon>Bacteria</taxon>
        <taxon>Bacillati</taxon>
        <taxon>Bacillota</taxon>
        <taxon>Clostridia</taxon>
        <taxon>Eubacteriales</taxon>
        <taxon>Oscillospiraceae</taxon>
        <taxon>Acetivibrio</taxon>
    </lineage>
</organism>
<reference key="1">
    <citation type="submission" date="2007-02" db="EMBL/GenBank/DDBJ databases">
        <title>Complete sequence of Clostridium thermocellum ATCC 27405.</title>
        <authorList>
            <consortium name="US DOE Joint Genome Institute"/>
            <person name="Copeland A."/>
            <person name="Lucas S."/>
            <person name="Lapidus A."/>
            <person name="Barry K."/>
            <person name="Detter J.C."/>
            <person name="Glavina del Rio T."/>
            <person name="Hammon N."/>
            <person name="Israni S."/>
            <person name="Dalin E."/>
            <person name="Tice H."/>
            <person name="Pitluck S."/>
            <person name="Chertkov O."/>
            <person name="Brettin T."/>
            <person name="Bruce D."/>
            <person name="Han C."/>
            <person name="Tapia R."/>
            <person name="Gilna P."/>
            <person name="Schmutz J."/>
            <person name="Larimer F."/>
            <person name="Land M."/>
            <person name="Hauser L."/>
            <person name="Kyrpides N."/>
            <person name="Mikhailova N."/>
            <person name="Wu J.H.D."/>
            <person name="Newcomb M."/>
            <person name="Richardson P."/>
        </authorList>
    </citation>
    <scope>NUCLEOTIDE SEQUENCE [LARGE SCALE GENOMIC DNA]</scope>
    <source>
        <strain>ATCC 27405 / DSM 1237 / JCM 9322 / NBRC 103400 / NCIMB 10682 / NRRL B-4536 / VPI 7372</strain>
    </source>
</reference>
<protein>
    <recommendedName>
        <fullName evidence="1">Urease subunit beta</fullName>
        <ecNumber evidence="1">3.5.1.5</ecNumber>
    </recommendedName>
    <alternativeName>
        <fullName evidence="1">Urea amidohydrolase subunit beta</fullName>
    </alternativeName>
</protein>
<name>URE2_ACET2</name>
<accession>A3DGF9</accession>
<sequence length="122" mass="13828">MIPGEYIIKNEFITLNDGRRTLNIKVSNTGDRPVQVGSHYHFFEVNRYLEFDRKSAFGMRLDIPSGTAVRFEPGEEKTVQLVEIGGSREIYGLNDLTCGPLDREDLSNVFKKAKELGFKGVE</sequence>
<feature type="chain" id="PRO_1000070731" description="Urease subunit beta">
    <location>
        <begin position="1"/>
        <end position="122"/>
    </location>
</feature>
<dbReference type="EC" id="3.5.1.5" evidence="1"/>
<dbReference type="EMBL" id="CP000568">
    <property type="protein sequence ID" value="ABN53038.1"/>
    <property type="molecule type" value="Genomic_DNA"/>
</dbReference>
<dbReference type="RefSeq" id="WP_003515807.1">
    <property type="nucleotide sequence ID" value="NC_009012.1"/>
</dbReference>
<dbReference type="SMR" id="A3DGF9"/>
<dbReference type="STRING" id="203119.Cthe_1817"/>
<dbReference type="GeneID" id="93968719"/>
<dbReference type="KEGG" id="cth:Cthe_1817"/>
<dbReference type="eggNOG" id="COG0832">
    <property type="taxonomic scope" value="Bacteria"/>
</dbReference>
<dbReference type="HOGENOM" id="CLU_129707_1_1_9"/>
<dbReference type="OrthoDB" id="9797217at2"/>
<dbReference type="UniPathway" id="UPA00258">
    <property type="reaction ID" value="UER00370"/>
</dbReference>
<dbReference type="Proteomes" id="UP000002145">
    <property type="component" value="Chromosome"/>
</dbReference>
<dbReference type="GO" id="GO:0035550">
    <property type="term" value="C:urease complex"/>
    <property type="evidence" value="ECO:0007669"/>
    <property type="project" value="InterPro"/>
</dbReference>
<dbReference type="GO" id="GO:0009039">
    <property type="term" value="F:urease activity"/>
    <property type="evidence" value="ECO:0007669"/>
    <property type="project" value="UniProtKB-UniRule"/>
</dbReference>
<dbReference type="GO" id="GO:0043419">
    <property type="term" value="P:urea catabolic process"/>
    <property type="evidence" value="ECO:0007669"/>
    <property type="project" value="UniProtKB-UniRule"/>
</dbReference>
<dbReference type="CDD" id="cd00407">
    <property type="entry name" value="Urease_beta"/>
    <property type="match status" value="1"/>
</dbReference>
<dbReference type="FunFam" id="2.10.150.10:FF:000001">
    <property type="entry name" value="Urease subunit beta"/>
    <property type="match status" value="1"/>
</dbReference>
<dbReference type="Gene3D" id="2.10.150.10">
    <property type="entry name" value="Urease, beta subunit"/>
    <property type="match status" value="1"/>
</dbReference>
<dbReference type="HAMAP" id="MF_01954">
    <property type="entry name" value="Urease_beta"/>
    <property type="match status" value="1"/>
</dbReference>
<dbReference type="InterPro" id="IPR002019">
    <property type="entry name" value="Urease_beta-like"/>
</dbReference>
<dbReference type="InterPro" id="IPR036461">
    <property type="entry name" value="Urease_betasu_sf"/>
</dbReference>
<dbReference type="InterPro" id="IPR050069">
    <property type="entry name" value="Urease_subunit"/>
</dbReference>
<dbReference type="NCBIfam" id="NF009682">
    <property type="entry name" value="PRK13203.1"/>
    <property type="match status" value="1"/>
</dbReference>
<dbReference type="NCBIfam" id="TIGR00192">
    <property type="entry name" value="urease_beta"/>
    <property type="match status" value="1"/>
</dbReference>
<dbReference type="PANTHER" id="PTHR33569">
    <property type="entry name" value="UREASE"/>
    <property type="match status" value="1"/>
</dbReference>
<dbReference type="PANTHER" id="PTHR33569:SF1">
    <property type="entry name" value="UREASE"/>
    <property type="match status" value="1"/>
</dbReference>
<dbReference type="Pfam" id="PF00699">
    <property type="entry name" value="Urease_beta"/>
    <property type="match status" value="1"/>
</dbReference>
<dbReference type="SUPFAM" id="SSF51278">
    <property type="entry name" value="Urease, beta-subunit"/>
    <property type="match status" value="1"/>
</dbReference>
<comment type="catalytic activity">
    <reaction evidence="1">
        <text>urea + 2 H2O + H(+) = hydrogencarbonate + 2 NH4(+)</text>
        <dbReference type="Rhea" id="RHEA:20557"/>
        <dbReference type="ChEBI" id="CHEBI:15377"/>
        <dbReference type="ChEBI" id="CHEBI:15378"/>
        <dbReference type="ChEBI" id="CHEBI:16199"/>
        <dbReference type="ChEBI" id="CHEBI:17544"/>
        <dbReference type="ChEBI" id="CHEBI:28938"/>
        <dbReference type="EC" id="3.5.1.5"/>
    </reaction>
</comment>
<comment type="pathway">
    <text evidence="1">Nitrogen metabolism; urea degradation; CO(2) and NH(3) from urea (urease route): step 1/1.</text>
</comment>
<comment type="subunit">
    <text evidence="1">Heterotrimer of UreA (gamma), UreB (beta) and UreC (alpha) subunits. Three heterotrimers associate to form the active enzyme.</text>
</comment>
<comment type="subcellular location">
    <subcellularLocation>
        <location evidence="1">Cytoplasm</location>
    </subcellularLocation>
</comment>
<comment type="similarity">
    <text evidence="1">Belongs to the urease beta subunit family.</text>
</comment>